<protein>
    <recommendedName>
        <fullName evidence="1">Ferrochelatase</fullName>
        <ecNumber evidence="1">4.98.1.1</ecNumber>
    </recommendedName>
    <alternativeName>
        <fullName evidence="1">Heme synthase</fullName>
    </alternativeName>
    <alternativeName>
        <fullName evidence="1">Protoheme ferro-lyase</fullName>
    </alternativeName>
</protein>
<organism>
    <name type="scientific">Cupriavidus taiwanensis (strain DSM 17343 / BCRC 17206 / CCUG 44338 / CIP 107171 / LMG 19424 / R1)</name>
    <name type="common">Ralstonia taiwanensis (strain LMG 19424)</name>
    <dbReference type="NCBI Taxonomy" id="977880"/>
    <lineage>
        <taxon>Bacteria</taxon>
        <taxon>Pseudomonadati</taxon>
        <taxon>Pseudomonadota</taxon>
        <taxon>Betaproteobacteria</taxon>
        <taxon>Burkholderiales</taxon>
        <taxon>Burkholderiaceae</taxon>
        <taxon>Cupriavidus</taxon>
    </lineage>
</organism>
<gene>
    <name evidence="1" type="primary">hemH</name>
    <name type="ordered locus">RALTA_A1114</name>
</gene>
<comment type="function">
    <text evidence="1">Catalyzes the ferrous insertion into protoporphyrin IX.</text>
</comment>
<comment type="catalytic activity">
    <reaction evidence="1">
        <text>heme b + 2 H(+) = protoporphyrin IX + Fe(2+)</text>
        <dbReference type="Rhea" id="RHEA:22584"/>
        <dbReference type="ChEBI" id="CHEBI:15378"/>
        <dbReference type="ChEBI" id="CHEBI:29033"/>
        <dbReference type="ChEBI" id="CHEBI:57306"/>
        <dbReference type="ChEBI" id="CHEBI:60344"/>
        <dbReference type="EC" id="4.98.1.1"/>
    </reaction>
</comment>
<comment type="pathway">
    <text evidence="1">Porphyrin-containing compound metabolism; protoheme biosynthesis; protoheme from protoporphyrin-IX: step 1/1.</text>
</comment>
<comment type="subcellular location">
    <subcellularLocation>
        <location evidence="1">Cytoplasm</location>
    </subcellularLocation>
</comment>
<comment type="similarity">
    <text evidence="1">Belongs to the ferrochelatase family.</text>
</comment>
<evidence type="ECO:0000255" key="1">
    <source>
        <dbReference type="HAMAP-Rule" id="MF_00323"/>
    </source>
</evidence>
<keyword id="KW-0963">Cytoplasm</keyword>
<keyword id="KW-0350">Heme biosynthesis</keyword>
<keyword id="KW-0408">Iron</keyword>
<keyword id="KW-0456">Lyase</keyword>
<keyword id="KW-0479">Metal-binding</keyword>
<keyword id="KW-0627">Porphyrin biosynthesis</keyword>
<reference key="1">
    <citation type="journal article" date="2008" name="Genome Res.">
        <title>Genome sequence of the beta-rhizobium Cupriavidus taiwanensis and comparative genomics of rhizobia.</title>
        <authorList>
            <person name="Amadou C."/>
            <person name="Pascal G."/>
            <person name="Mangenot S."/>
            <person name="Glew M."/>
            <person name="Bontemps C."/>
            <person name="Capela D."/>
            <person name="Carrere S."/>
            <person name="Cruveiller S."/>
            <person name="Dossat C."/>
            <person name="Lajus A."/>
            <person name="Marchetti M."/>
            <person name="Poinsot V."/>
            <person name="Rouy Z."/>
            <person name="Servin B."/>
            <person name="Saad M."/>
            <person name="Schenowitz C."/>
            <person name="Barbe V."/>
            <person name="Batut J."/>
            <person name="Medigue C."/>
            <person name="Masson-Boivin C."/>
        </authorList>
    </citation>
    <scope>NUCLEOTIDE SEQUENCE [LARGE SCALE GENOMIC DNA]</scope>
    <source>
        <strain>DSM 17343 / BCRC 17206 / CCUG 44338 / CIP 107171 / LMG 19424 / R1</strain>
    </source>
</reference>
<feature type="chain" id="PRO_1000116041" description="Ferrochelatase">
    <location>
        <begin position="1"/>
        <end position="371"/>
    </location>
</feature>
<feature type="binding site" evidence="1">
    <location>
        <position position="218"/>
    </location>
    <ligand>
        <name>Fe cation</name>
        <dbReference type="ChEBI" id="CHEBI:24875"/>
    </ligand>
</feature>
<feature type="binding site" evidence="1">
    <location>
        <position position="299"/>
    </location>
    <ligand>
        <name>Fe cation</name>
        <dbReference type="ChEBI" id="CHEBI:24875"/>
    </ligand>
</feature>
<accession>B3R447</accession>
<name>HEMH_CUPTR</name>
<sequence>MTFSPEPAYQHGQAPRTAILLVNLGTPDAPTPKAVGRYLKEFLSDPRVVEIPRAAWLPLLYGVILPLRSRASALKYESIWLREAHMTGSPLLVYSERQAHALQRLLHQNGHEVTVACAMRYGNPSIGSVMEALRRQGCEQVLVLPMYPQYSGTTTATAFDEVFRVLGQWRNQPELRLVKHFHDHPAYISALQQQVSAYWARHGMPDFGRGDKLILSFHGVPRRTLELGDPYHCECLKTGRLLGEALGLQPGQYQVTFQSRFGKAEWLQPYTAPTLAELGKVGAGRVDVFCPGFPADCIETLEEIAMEGQTEFKVAGGKDFHFIPCMNDAAPWIAAMAEIALQHLQGWALATPHPHELEARRTRAQARGAAA</sequence>
<dbReference type="EC" id="4.98.1.1" evidence="1"/>
<dbReference type="EMBL" id="CU633749">
    <property type="protein sequence ID" value="CAQ69079.1"/>
    <property type="molecule type" value="Genomic_DNA"/>
</dbReference>
<dbReference type="RefSeq" id="WP_012352408.1">
    <property type="nucleotide sequence ID" value="NC_010528.1"/>
</dbReference>
<dbReference type="SMR" id="B3R447"/>
<dbReference type="GeneID" id="29762579"/>
<dbReference type="KEGG" id="cti:RALTA_A1114"/>
<dbReference type="eggNOG" id="COG0276">
    <property type="taxonomic scope" value="Bacteria"/>
</dbReference>
<dbReference type="HOGENOM" id="CLU_018884_0_0_4"/>
<dbReference type="BioCyc" id="CTAI977880:RALTA_RS05315-MONOMER"/>
<dbReference type="UniPathway" id="UPA00252">
    <property type="reaction ID" value="UER00325"/>
</dbReference>
<dbReference type="Proteomes" id="UP000001692">
    <property type="component" value="Chromosome 1"/>
</dbReference>
<dbReference type="GO" id="GO:0005737">
    <property type="term" value="C:cytoplasm"/>
    <property type="evidence" value="ECO:0007669"/>
    <property type="project" value="UniProtKB-SubCell"/>
</dbReference>
<dbReference type="GO" id="GO:0004325">
    <property type="term" value="F:ferrochelatase activity"/>
    <property type="evidence" value="ECO:0007669"/>
    <property type="project" value="UniProtKB-UniRule"/>
</dbReference>
<dbReference type="GO" id="GO:0046872">
    <property type="term" value="F:metal ion binding"/>
    <property type="evidence" value="ECO:0007669"/>
    <property type="project" value="UniProtKB-KW"/>
</dbReference>
<dbReference type="GO" id="GO:0006783">
    <property type="term" value="P:heme biosynthetic process"/>
    <property type="evidence" value="ECO:0007669"/>
    <property type="project" value="UniProtKB-UniRule"/>
</dbReference>
<dbReference type="CDD" id="cd00419">
    <property type="entry name" value="Ferrochelatase_C"/>
    <property type="match status" value="1"/>
</dbReference>
<dbReference type="CDD" id="cd03411">
    <property type="entry name" value="Ferrochelatase_N"/>
    <property type="match status" value="1"/>
</dbReference>
<dbReference type="FunFam" id="3.40.50.1400:FF:000002">
    <property type="entry name" value="Ferrochelatase"/>
    <property type="match status" value="1"/>
</dbReference>
<dbReference type="Gene3D" id="3.40.50.1400">
    <property type="match status" value="2"/>
</dbReference>
<dbReference type="HAMAP" id="MF_00323">
    <property type="entry name" value="Ferrochelatase"/>
    <property type="match status" value="1"/>
</dbReference>
<dbReference type="InterPro" id="IPR001015">
    <property type="entry name" value="Ferrochelatase"/>
</dbReference>
<dbReference type="InterPro" id="IPR019772">
    <property type="entry name" value="Ferrochelatase_AS"/>
</dbReference>
<dbReference type="InterPro" id="IPR033644">
    <property type="entry name" value="Ferrochelatase_C"/>
</dbReference>
<dbReference type="InterPro" id="IPR033659">
    <property type="entry name" value="Ferrochelatase_N"/>
</dbReference>
<dbReference type="NCBIfam" id="TIGR00109">
    <property type="entry name" value="hemH"/>
    <property type="match status" value="1"/>
</dbReference>
<dbReference type="PANTHER" id="PTHR11108">
    <property type="entry name" value="FERROCHELATASE"/>
    <property type="match status" value="1"/>
</dbReference>
<dbReference type="PANTHER" id="PTHR11108:SF1">
    <property type="entry name" value="FERROCHELATASE, MITOCHONDRIAL"/>
    <property type="match status" value="1"/>
</dbReference>
<dbReference type="Pfam" id="PF00762">
    <property type="entry name" value="Ferrochelatase"/>
    <property type="match status" value="1"/>
</dbReference>
<dbReference type="SUPFAM" id="SSF53800">
    <property type="entry name" value="Chelatase"/>
    <property type="match status" value="1"/>
</dbReference>
<dbReference type="PROSITE" id="PS00534">
    <property type="entry name" value="FERROCHELATASE"/>
    <property type="match status" value="1"/>
</dbReference>
<proteinExistence type="inferred from homology"/>